<name>EFTU_PSECP</name>
<keyword id="KW-0963">Cytoplasm</keyword>
<keyword id="KW-0251">Elongation factor</keyword>
<keyword id="KW-0342">GTP-binding</keyword>
<keyword id="KW-0378">Hydrolase</keyword>
<keyword id="KW-0460">Magnesium</keyword>
<keyword id="KW-0479">Metal-binding</keyword>
<keyword id="KW-0547">Nucleotide-binding</keyword>
<keyword id="KW-0648">Protein biosynthesis</keyword>
<gene>
    <name evidence="2" type="primary">tuf</name>
    <name type="ordered locus">Achl_2692</name>
</gene>
<dbReference type="EC" id="3.6.5.3" evidence="2"/>
<dbReference type="EMBL" id="CP001341">
    <property type="protein sequence ID" value="ACL40657.1"/>
    <property type="molecule type" value="Genomic_DNA"/>
</dbReference>
<dbReference type="RefSeq" id="WP_015937856.1">
    <property type="nucleotide sequence ID" value="NC_011886.1"/>
</dbReference>
<dbReference type="SMR" id="B8HD11"/>
<dbReference type="STRING" id="452863.Achl_2692"/>
<dbReference type="KEGG" id="ach:Achl_2692"/>
<dbReference type="eggNOG" id="COG0050">
    <property type="taxonomic scope" value="Bacteria"/>
</dbReference>
<dbReference type="HOGENOM" id="CLU_007265_0_1_11"/>
<dbReference type="OrthoDB" id="9803139at2"/>
<dbReference type="Proteomes" id="UP000002505">
    <property type="component" value="Chromosome"/>
</dbReference>
<dbReference type="GO" id="GO:0005829">
    <property type="term" value="C:cytosol"/>
    <property type="evidence" value="ECO:0007669"/>
    <property type="project" value="TreeGrafter"/>
</dbReference>
<dbReference type="GO" id="GO:0005525">
    <property type="term" value="F:GTP binding"/>
    <property type="evidence" value="ECO:0007669"/>
    <property type="project" value="UniProtKB-UniRule"/>
</dbReference>
<dbReference type="GO" id="GO:0003924">
    <property type="term" value="F:GTPase activity"/>
    <property type="evidence" value="ECO:0007669"/>
    <property type="project" value="InterPro"/>
</dbReference>
<dbReference type="GO" id="GO:0003746">
    <property type="term" value="F:translation elongation factor activity"/>
    <property type="evidence" value="ECO:0007669"/>
    <property type="project" value="UniProtKB-UniRule"/>
</dbReference>
<dbReference type="CDD" id="cd01884">
    <property type="entry name" value="EF_Tu"/>
    <property type="match status" value="1"/>
</dbReference>
<dbReference type="CDD" id="cd03697">
    <property type="entry name" value="EFTU_II"/>
    <property type="match status" value="1"/>
</dbReference>
<dbReference type="CDD" id="cd03707">
    <property type="entry name" value="EFTU_III"/>
    <property type="match status" value="1"/>
</dbReference>
<dbReference type="FunFam" id="2.40.30.10:FF:000001">
    <property type="entry name" value="Elongation factor Tu"/>
    <property type="match status" value="1"/>
</dbReference>
<dbReference type="FunFam" id="3.40.50.300:FF:000003">
    <property type="entry name" value="Elongation factor Tu"/>
    <property type="match status" value="1"/>
</dbReference>
<dbReference type="Gene3D" id="3.40.50.300">
    <property type="entry name" value="P-loop containing nucleotide triphosphate hydrolases"/>
    <property type="match status" value="1"/>
</dbReference>
<dbReference type="Gene3D" id="2.40.30.10">
    <property type="entry name" value="Translation factors"/>
    <property type="match status" value="2"/>
</dbReference>
<dbReference type="HAMAP" id="MF_00118_B">
    <property type="entry name" value="EF_Tu_B"/>
    <property type="match status" value="1"/>
</dbReference>
<dbReference type="InterPro" id="IPR041709">
    <property type="entry name" value="EF-Tu_GTP-bd"/>
</dbReference>
<dbReference type="InterPro" id="IPR050055">
    <property type="entry name" value="EF-Tu_GTPase"/>
</dbReference>
<dbReference type="InterPro" id="IPR004161">
    <property type="entry name" value="EFTu-like_2"/>
</dbReference>
<dbReference type="InterPro" id="IPR033720">
    <property type="entry name" value="EFTU_2"/>
</dbReference>
<dbReference type="InterPro" id="IPR031157">
    <property type="entry name" value="G_TR_CS"/>
</dbReference>
<dbReference type="InterPro" id="IPR027417">
    <property type="entry name" value="P-loop_NTPase"/>
</dbReference>
<dbReference type="InterPro" id="IPR005225">
    <property type="entry name" value="Small_GTP-bd"/>
</dbReference>
<dbReference type="InterPro" id="IPR000795">
    <property type="entry name" value="T_Tr_GTP-bd_dom"/>
</dbReference>
<dbReference type="InterPro" id="IPR009000">
    <property type="entry name" value="Transl_B-barrel_sf"/>
</dbReference>
<dbReference type="InterPro" id="IPR009001">
    <property type="entry name" value="Transl_elong_EF1A/Init_IF2_C"/>
</dbReference>
<dbReference type="InterPro" id="IPR004541">
    <property type="entry name" value="Transl_elong_EFTu/EF1A_bac/org"/>
</dbReference>
<dbReference type="InterPro" id="IPR004160">
    <property type="entry name" value="Transl_elong_EFTu/EF1A_C"/>
</dbReference>
<dbReference type="NCBIfam" id="TIGR00485">
    <property type="entry name" value="EF-Tu"/>
    <property type="match status" value="1"/>
</dbReference>
<dbReference type="NCBIfam" id="NF000766">
    <property type="entry name" value="PRK00049.1"/>
    <property type="match status" value="1"/>
</dbReference>
<dbReference type="NCBIfam" id="NF009372">
    <property type="entry name" value="PRK12735.1"/>
    <property type="match status" value="1"/>
</dbReference>
<dbReference type="NCBIfam" id="NF009373">
    <property type="entry name" value="PRK12736.1"/>
    <property type="match status" value="1"/>
</dbReference>
<dbReference type="NCBIfam" id="TIGR00231">
    <property type="entry name" value="small_GTP"/>
    <property type="match status" value="1"/>
</dbReference>
<dbReference type="PANTHER" id="PTHR43721:SF22">
    <property type="entry name" value="ELONGATION FACTOR TU, MITOCHONDRIAL"/>
    <property type="match status" value="1"/>
</dbReference>
<dbReference type="PANTHER" id="PTHR43721">
    <property type="entry name" value="ELONGATION FACTOR TU-RELATED"/>
    <property type="match status" value="1"/>
</dbReference>
<dbReference type="Pfam" id="PF00009">
    <property type="entry name" value="GTP_EFTU"/>
    <property type="match status" value="1"/>
</dbReference>
<dbReference type="Pfam" id="PF03144">
    <property type="entry name" value="GTP_EFTU_D2"/>
    <property type="match status" value="1"/>
</dbReference>
<dbReference type="Pfam" id="PF03143">
    <property type="entry name" value="GTP_EFTU_D3"/>
    <property type="match status" value="1"/>
</dbReference>
<dbReference type="PRINTS" id="PR00315">
    <property type="entry name" value="ELONGATNFCT"/>
</dbReference>
<dbReference type="SUPFAM" id="SSF50465">
    <property type="entry name" value="EF-Tu/eEF-1alpha/eIF2-gamma C-terminal domain"/>
    <property type="match status" value="1"/>
</dbReference>
<dbReference type="SUPFAM" id="SSF52540">
    <property type="entry name" value="P-loop containing nucleoside triphosphate hydrolases"/>
    <property type="match status" value="1"/>
</dbReference>
<dbReference type="SUPFAM" id="SSF50447">
    <property type="entry name" value="Translation proteins"/>
    <property type="match status" value="1"/>
</dbReference>
<dbReference type="PROSITE" id="PS00301">
    <property type="entry name" value="G_TR_1"/>
    <property type="match status" value="1"/>
</dbReference>
<dbReference type="PROSITE" id="PS51722">
    <property type="entry name" value="G_TR_2"/>
    <property type="match status" value="1"/>
</dbReference>
<organism>
    <name type="scientific">Pseudarthrobacter chlorophenolicus (strain ATCC 700700 / DSM 12829 / CIP 107037 / JCM 12360 / KCTC 9906 / NCIMB 13794 / A6)</name>
    <name type="common">Arthrobacter chlorophenolicus</name>
    <dbReference type="NCBI Taxonomy" id="452863"/>
    <lineage>
        <taxon>Bacteria</taxon>
        <taxon>Bacillati</taxon>
        <taxon>Actinomycetota</taxon>
        <taxon>Actinomycetes</taxon>
        <taxon>Micrococcales</taxon>
        <taxon>Micrococcaceae</taxon>
        <taxon>Pseudarthrobacter</taxon>
    </lineage>
</organism>
<sequence>MAKAKFERTKPHVNIGTIGHVDHGKTTLTAAISKVLYDKYPDLNEKRDFASIDSAPEERQRGITINISHVEYQTEKRHYAHVDAPGHADYIKNMITGAAQMDGAILVVAATDGPMAQTREHVLLARQVGVPYLLVALNKSDMVDDEELLDLVEMEVRELLSSQGFDGDEAPVVRVSGLKALEGDPVWVKSVEDLMAAVDESVPDPVRDRDKPFLMPIEDVFTITGRGTVVTGRAERGTLAINSEVEIVGIRPVQKTTVTGIEMFHKQLDEAWAGENCGLLLRGLKRDDVERGQVVVKPGSITPHTDFEANVYILSKDEGGRHNPFYSNYRPQFYFRTTDVTGVITLPEGTEMVMPGDNTEMTVALIQPIAMEEGLGFAIREGGRTVGSGRVTKIIK</sequence>
<accession>B8HD11</accession>
<reference key="1">
    <citation type="submission" date="2009-01" db="EMBL/GenBank/DDBJ databases">
        <title>Complete sequence of chromosome of Arthrobacter chlorophenolicus A6.</title>
        <authorList>
            <consortium name="US DOE Joint Genome Institute"/>
            <person name="Lucas S."/>
            <person name="Copeland A."/>
            <person name="Lapidus A."/>
            <person name="Glavina del Rio T."/>
            <person name="Tice H."/>
            <person name="Bruce D."/>
            <person name="Goodwin L."/>
            <person name="Pitluck S."/>
            <person name="Goltsman E."/>
            <person name="Clum A."/>
            <person name="Larimer F."/>
            <person name="Land M."/>
            <person name="Hauser L."/>
            <person name="Kyrpides N."/>
            <person name="Mikhailova N."/>
            <person name="Jansson J."/>
            <person name="Richardson P."/>
        </authorList>
    </citation>
    <scope>NUCLEOTIDE SEQUENCE [LARGE SCALE GENOMIC DNA]</scope>
    <source>
        <strain>ATCC 700700 / DSM 12829 / CIP 107037 / JCM 12360 / KCTC 9906 / NCIMB 13794 / A6</strain>
    </source>
</reference>
<proteinExistence type="inferred from homology"/>
<protein>
    <recommendedName>
        <fullName evidence="2">Elongation factor Tu</fullName>
        <shortName evidence="2">EF-Tu</shortName>
        <ecNumber evidence="2">3.6.5.3</ecNumber>
    </recommendedName>
</protein>
<feature type="chain" id="PRO_1000201378" description="Elongation factor Tu">
    <location>
        <begin position="1"/>
        <end position="396"/>
    </location>
</feature>
<feature type="domain" description="tr-type G">
    <location>
        <begin position="10"/>
        <end position="206"/>
    </location>
</feature>
<feature type="region of interest" description="G1" evidence="1">
    <location>
        <begin position="19"/>
        <end position="26"/>
    </location>
</feature>
<feature type="region of interest" description="G2" evidence="1">
    <location>
        <begin position="62"/>
        <end position="66"/>
    </location>
</feature>
<feature type="region of interest" description="G3" evidence="1">
    <location>
        <begin position="83"/>
        <end position="86"/>
    </location>
</feature>
<feature type="region of interest" description="G4" evidence="1">
    <location>
        <begin position="138"/>
        <end position="141"/>
    </location>
</feature>
<feature type="region of interest" description="G5" evidence="1">
    <location>
        <begin position="176"/>
        <end position="178"/>
    </location>
</feature>
<feature type="binding site" evidence="2">
    <location>
        <begin position="19"/>
        <end position="26"/>
    </location>
    <ligand>
        <name>GTP</name>
        <dbReference type="ChEBI" id="CHEBI:37565"/>
    </ligand>
</feature>
<feature type="binding site" evidence="2">
    <location>
        <position position="26"/>
    </location>
    <ligand>
        <name>Mg(2+)</name>
        <dbReference type="ChEBI" id="CHEBI:18420"/>
    </ligand>
</feature>
<feature type="binding site" evidence="2">
    <location>
        <begin position="83"/>
        <end position="87"/>
    </location>
    <ligand>
        <name>GTP</name>
        <dbReference type="ChEBI" id="CHEBI:37565"/>
    </ligand>
</feature>
<feature type="binding site" evidence="2">
    <location>
        <begin position="138"/>
        <end position="141"/>
    </location>
    <ligand>
        <name>GTP</name>
        <dbReference type="ChEBI" id="CHEBI:37565"/>
    </ligand>
</feature>
<evidence type="ECO:0000250" key="1"/>
<evidence type="ECO:0000255" key="2">
    <source>
        <dbReference type="HAMAP-Rule" id="MF_00118"/>
    </source>
</evidence>
<comment type="function">
    <text evidence="2">GTP hydrolase that promotes the GTP-dependent binding of aminoacyl-tRNA to the A-site of ribosomes during protein biosynthesis.</text>
</comment>
<comment type="catalytic activity">
    <reaction evidence="2">
        <text>GTP + H2O = GDP + phosphate + H(+)</text>
        <dbReference type="Rhea" id="RHEA:19669"/>
        <dbReference type="ChEBI" id="CHEBI:15377"/>
        <dbReference type="ChEBI" id="CHEBI:15378"/>
        <dbReference type="ChEBI" id="CHEBI:37565"/>
        <dbReference type="ChEBI" id="CHEBI:43474"/>
        <dbReference type="ChEBI" id="CHEBI:58189"/>
        <dbReference type="EC" id="3.6.5.3"/>
    </reaction>
    <physiologicalReaction direction="left-to-right" evidence="2">
        <dbReference type="Rhea" id="RHEA:19670"/>
    </physiologicalReaction>
</comment>
<comment type="subunit">
    <text evidence="2">Monomer.</text>
</comment>
<comment type="subcellular location">
    <subcellularLocation>
        <location evidence="2">Cytoplasm</location>
    </subcellularLocation>
</comment>
<comment type="similarity">
    <text evidence="2">Belongs to the TRAFAC class translation factor GTPase superfamily. Classic translation factor GTPase family. EF-Tu/EF-1A subfamily.</text>
</comment>